<sequence length="471" mass="51786">MDMNEHRNRRLKLIMISATFGGLLFGYDTGVINGALPFMARPDQLDLTPVTEGLVTSILLLGAAFGALLCGRLADRYGRRKMILNLSFLFFLASLGTALAPNVFIMAVFRFLLGLAVGGASAMVPAFLAEMAPHEKRGRMVTQNELMIVGGQFLAYVFNAILGVTMANTGHVWRYMLVICAVPAIMLFASMLKVPESPRWLISKGKNSEALRVLKQIREDKRAEAECREIQEAVEKDTALEKASLKDFSTPWLRRLLWIGIGVAIVNQITGVNSIMYYGTQILKESGFGTKAALIANIGNGLISVIAVIFGIWLVGKVRRRPILLIGLAGTTTALLLIAIFSIVLDGSMALPYVVLSLTVLFLAFMQGCVGPVTWLVIAEIFPQRLRGLGSGISVFFLWILNFVIGFAFPILLSSVGLSFTFFIFVALGVLAIGFVYKFMPETKGRTLEELEEHFRSRHDHNTPEQSVIEV</sequence>
<proteinExistence type="inferred from homology"/>
<keyword id="KW-1003">Cell membrane</keyword>
<keyword id="KW-0472">Membrane</keyword>
<keyword id="KW-1185">Reference proteome</keyword>
<keyword id="KW-0812">Transmembrane</keyword>
<keyword id="KW-1133">Transmembrane helix</keyword>
<keyword id="KW-0813">Transport</keyword>
<protein>
    <recommendedName>
        <fullName>Putative metabolite transport protein YncC</fullName>
    </recommendedName>
</protein>
<feature type="chain" id="PRO_0000360511" description="Putative metabolite transport protein YncC">
    <location>
        <begin position="1"/>
        <end position="471"/>
    </location>
</feature>
<feature type="transmembrane region" description="Helical" evidence="1">
    <location>
        <begin position="13"/>
        <end position="33"/>
    </location>
</feature>
<feature type="transmembrane region" description="Helical" evidence="1">
    <location>
        <begin position="50"/>
        <end position="70"/>
    </location>
</feature>
<feature type="transmembrane region" description="Helical" evidence="1">
    <location>
        <begin position="88"/>
        <end position="108"/>
    </location>
</feature>
<feature type="transmembrane region" description="Helical" evidence="1">
    <location>
        <begin position="111"/>
        <end position="131"/>
    </location>
</feature>
<feature type="transmembrane region" description="Helical" evidence="1">
    <location>
        <begin position="146"/>
        <end position="166"/>
    </location>
</feature>
<feature type="transmembrane region" description="Helical" evidence="1">
    <location>
        <begin position="175"/>
        <end position="195"/>
    </location>
</feature>
<feature type="transmembrane region" description="Helical" evidence="1">
    <location>
        <begin position="256"/>
        <end position="276"/>
    </location>
</feature>
<feature type="transmembrane region" description="Helical" evidence="1">
    <location>
        <begin position="295"/>
        <end position="315"/>
    </location>
</feature>
<feature type="transmembrane region" description="Helical" evidence="1">
    <location>
        <begin position="323"/>
        <end position="343"/>
    </location>
</feature>
<feature type="transmembrane region" description="Helical" evidence="1">
    <location>
        <begin position="358"/>
        <end position="378"/>
    </location>
</feature>
<feature type="transmembrane region" description="Helical" evidence="1">
    <location>
        <begin position="393"/>
        <end position="413"/>
    </location>
</feature>
<feature type="transmembrane region" description="Helical" evidence="1">
    <location>
        <begin position="416"/>
        <end position="436"/>
    </location>
</feature>
<feature type="sequence conflict" description="In Ref. 1; AAB41096." evidence="2" ref="1">
    <original>YG</original>
    <variation>DR</variation>
    <location>
        <begin position="77"/>
        <end position="78"/>
    </location>
</feature>
<comment type="subcellular location">
    <subcellularLocation>
        <location evidence="2">Cell membrane</location>
        <topology evidence="2">Multi-pass membrane protein</topology>
    </subcellularLocation>
</comment>
<comment type="similarity">
    <text evidence="2">Belongs to the major facilitator superfamily. Sugar transporter (TC 2.A.1.1) family.</text>
</comment>
<gene>
    <name type="primary">yncC</name>
    <name type="ordered locus">BSU17630</name>
</gene>
<organism>
    <name type="scientific">Bacillus subtilis (strain 168)</name>
    <dbReference type="NCBI Taxonomy" id="224308"/>
    <lineage>
        <taxon>Bacteria</taxon>
        <taxon>Bacillati</taxon>
        <taxon>Bacillota</taxon>
        <taxon>Bacilli</taxon>
        <taxon>Bacillales</taxon>
        <taxon>Bacillaceae</taxon>
        <taxon>Bacillus</taxon>
    </lineage>
</organism>
<reference key="1">
    <citation type="submission" date="1996-08" db="EMBL/GenBank/DDBJ databases">
        <title>Sequencing of a 26 kb region of the Bacillus subtilis genome downstream of spoVJ.</title>
        <authorList>
            <person name="Borchert S."/>
            <person name="Klein C."/>
            <person name="Piksa B."/>
            <person name="Hammelmann M."/>
            <person name="Entian K.-D."/>
        </authorList>
    </citation>
    <scope>NUCLEOTIDE SEQUENCE [GENOMIC DNA]</scope>
</reference>
<reference key="2">
    <citation type="journal article" date="1997" name="Nature">
        <title>The complete genome sequence of the Gram-positive bacterium Bacillus subtilis.</title>
        <authorList>
            <person name="Kunst F."/>
            <person name="Ogasawara N."/>
            <person name="Moszer I."/>
            <person name="Albertini A.M."/>
            <person name="Alloni G."/>
            <person name="Azevedo V."/>
            <person name="Bertero M.G."/>
            <person name="Bessieres P."/>
            <person name="Bolotin A."/>
            <person name="Borchert S."/>
            <person name="Borriss R."/>
            <person name="Boursier L."/>
            <person name="Brans A."/>
            <person name="Braun M."/>
            <person name="Brignell S.C."/>
            <person name="Bron S."/>
            <person name="Brouillet S."/>
            <person name="Bruschi C.V."/>
            <person name="Caldwell B."/>
            <person name="Capuano V."/>
            <person name="Carter N.M."/>
            <person name="Choi S.-K."/>
            <person name="Codani J.-J."/>
            <person name="Connerton I.F."/>
            <person name="Cummings N.J."/>
            <person name="Daniel R.A."/>
            <person name="Denizot F."/>
            <person name="Devine K.M."/>
            <person name="Duesterhoeft A."/>
            <person name="Ehrlich S.D."/>
            <person name="Emmerson P.T."/>
            <person name="Entian K.-D."/>
            <person name="Errington J."/>
            <person name="Fabret C."/>
            <person name="Ferrari E."/>
            <person name="Foulger D."/>
            <person name="Fritz C."/>
            <person name="Fujita M."/>
            <person name="Fujita Y."/>
            <person name="Fuma S."/>
            <person name="Galizzi A."/>
            <person name="Galleron N."/>
            <person name="Ghim S.-Y."/>
            <person name="Glaser P."/>
            <person name="Goffeau A."/>
            <person name="Golightly E.J."/>
            <person name="Grandi G."/>
            <person name="Guiseppi G."/>
            <person name="Guy B.J."/>
            <person name="Haga K."/>
            <person name="Haiech J."/>
            <person name="Harwood C.R."/>
            <person name="Henaut A."/>
            <person name="Hilbert H."/>
            <person name="Holsappel S."/>
            <person name="Hosono S."/>
            <person name="Hullo M.-F."/>
            <person name="Itaya M."/>
            <person name="Jones L.-M."/>
            <person name="Joris B."/>
            <person name="Karamata D."/>
            <person name="Kasahara Y."/>
            <person name="Klaerr-Blanchard M."/>
            <person name="Klein C."/>
            <person name="Kobayashi Y."/>
            <person name="Koetter P."/>
            <person name="Koningstein G."/>
            <person name="Krogh S."/>
            <person name="Kumano M."/>
            <person name="Kurita K."/>
            <person name="Lapidus A."/>
            <person name="Lardinois S."/>
            <person name="Lauber J."/>
            <person name="Lazarevic V."/>
            <person name="Lee S.-M."/>
            <person name="Levine A."/>
            <person name="Liu H."/>
            <person name="Masuda S."/>
            <person name="Mauel C."/>
            <person name="Medigue C."/>
            <person name="Medina N."/>
            <person name="Mellado R.P."/>
            <person name="Mizuno M."/>
            <person name="Moestl D."/>
            <person name="Nakai S."/>
            <person name="Noback M."/>
            <person name="Noone D."/>
            <person name="O'Reilly M."/>
            <person name="Ogawa K."/>
            <person name="Ogiwara A."/>
            <person name="Oudega B."/>
            <person name="Park S.-H."/>
            <person name="Parro V."/>
            <person name="Pohl T.M."/>
            <person name="Portetelle D."/>
            <person name="Porwollik S."/>
            <person name="Prescott A.M."/>
            <person name="Presecan E."/>
            <person name="Pujic P."/>
            <person name="Purnelle B."/>
            <person name="Rapoport G."/>
            <person name="Rey M."/>
            <person name="Reynolds S."/>
            <person name="Rieger M."/>
            <person name="Rivolta C."/>
            <person name="Rocha E."/>
            <person name="Roche B."/>
            <person name="Rose M."/>
            <person name="Sadaie Y."/>
            <person name="Sato T."/>
            <person name="Scanlan E."/>
            <person name="Schleich S."/>
            <person name="Schroeter R."/>
            <person name="Scoffone F."/>
            <person name="Sekiguchi J."/>
            <person name="Sekowska A."/>
            <person name="Seror S.J."/>
            <person name="Serror P."/>
            <person name="Shin B.-S."/>
            <person name="Soldo B."/>
            <person name="Sorokin A."/>
            <person name="Tacconi E."/>
            <person name="Takagi T."/>
            <person name="Takahashi H."/>
            <person name="Takemaru K."/>
            <person name="Takeuchi M."/>
            <person name="Tamakoshi A."/>
            <person name="Tanaka T."/>
            <person name="Terpstra P."/>
            <person name="Tognoni A."/>
            <person name="Tosato V."/>
            <person name="Uchiyama S."/>
            <person name="Vandenbol M."/>
            <person name="Vannier F."/>
            <person name="Vassarotti A."/>
            <person name="Viari A."/>
            <person name="Wambutt R."/>
            <person name="Wedler E."/>
            <person name="Wedler H."/>
            <person name="Weitzenegger T."/>
            <person name="Winters P."/>
            <person name="Wipat A."/>
            <person name="Yamamoto H."/>
            <person name="Yamane K."/>
            <person name="Yasumoto K."/>
            <person name="Yata K."/>
            <person name="Yoshida K."/>
            <person name="Yoshikawa H.-F."/>
            <person name="Zumstein E."/>
            <person name="Yoshikawa H."/>
            <person name="Danchin A."/>
        </authorList>
    </citation>
    <scope>NUCLEOTIDE SEQUENCE [LARGE SCALE GENOMIC DNA]</scope>
    <source>
        <strain>168</strain>
    </source>
</reference>
<reference key="3">
    <citation type="journal article" date="2009" name="Microbiology">
        <title>From a consortium sequence to a unified sequence: the Bacillus subtilis 168 reference genome a decade later.</title>
        <authorList>
            <person name="Barbe V."/>
            <person name="Cruveiller S."/>
            <person name="Kunst F."/>
            <person name="Lenoble P."/>
            <person name="Meurice G."/>
            <person name="Sekowska A."/>
            <person name="Vallenet D."/>
            <person name="Wang T."/>
            <person name="Moszer I."/>
            <person name="Medigue C."/>
            <person name="Danchin A."/>
        </authorList>
    </citation>
    <scope>SEQUENCE REVISION TO 77-78</scope>
</reference>
<accession>P94493</accession>
<accession>Q796H1</accession>
<evidence type="ECO:0000255" key="1"/>
<evidence type="ECO:0000305" key="2"/>
<dbReference type="EMBL" id="U66480">
    <property type="protein sequence ID" value="AAB41096.1"/>
    <property type="molecule type" value="Genomic_DNA"/>
</dbReference>
<dbReference type="EMBL" id="AL009126">
    <property type="protein sequence ID" value="CAB13647.2"/>
    <property type="molecule type" value="Genomic_DNA"/>
</dbReference>
<dbReference type="PIR" id="E69888">
    <property type="entry name" value="E69888"/>
</dbReference>
<dbReference type="RefSeq" id="NP_389645.2">
    <property type="nucleotide sequence ID" value="NC_000964.3"/>
</dbReference>
<dbReference type="RefSeq" id="WP_010886516.1">
    <property type="nucleotide sequence ID" value="NZ_OZ025638.1"/>
</dbReference>
<dbReference type="SMR" id="P94493"/>
<dbReference type="FunCoup" id="P94493">
    <property type="interactions" value="498"/>
</dbReference>
<dbReference type="STRING" id="224308.BSU17630"/>
<dbReference type="PaxDb" id="224308-BSU17630"/>
<dbReference type="EnsemblBacteria" id="CAB13647">
    <property type="protein sequence ID" value="CAB13647"/>
    <property type="gene ID" value="BSU_17630"/>
</dbReference>
<dbReference type="GeneID" id="939540"/>
<dbReference type="KEGG" id="bsu:BSU17630"/>
<dbReference type="PATRIC" id="fig|224308.179.peg.1914"/>
<dbReference type="eggNOG" id="COG2814">
    <property type="taxonomic scope" value="Bacteria"/>
</dbReference>
<dbReference type="InParanoid" id="P94493"/>
<dbReference type="OrthoDB" id="9783823at2"/>
<dbReference type="PhylomeDB" id="P94493"/>
<dbReference type="BioCyc" id="BSUB:BSU17630-MONOMER"/>
<dbReference type="Proteomes" id="UP000001570">
    <property type="component" value="Chromosome"/>
</dbReference>
<dbReference type="GO" id="GO:0016020">
    <property type="term" value="C:membrane"/>
    <property type="evidence" value="ECO:0000318"/>
    <property type="project" value="GO_Central"/>
</dbReference>
<dbReference type="GO" id="GO:0005886">
    <property type="term" value="C:plasma membrane"/>
    <property type="evidence" value="ECO:0007669"/>
    <property type="project" value="UniProtKB-SubCell"/>
</dbReference>
<dbReference type="GO" id="GO:0055056">
    <property type="term" value="F:D-glucose transmembrane transporter activity"/>
    <property type="evidence" value="ECO:0000318"/>
    <property type="project" value="GO_Central"/>
</dbReference>
<dbReference type="GO" id="GO:1904659">
    <property type="term" value="P:D-glucose transmembrane transport"/>
    <property type="evidence" value="ECO:0000318"/>
    <property type="project" value="GO_Central"/>
</dbReference>
<dbReference type="CDD" id="cd17359">
    <property type="entry name" value="MFS_XylE_like"/>
    <property type="match status" value="1"/>
</dbReference>
<dbReference type="FunFam" id="1.20.1250.20:FF:000073">
    <property type="entry name" value="MFS myo-inositol transporter, putative"/>
    <property type="match status" value="1"/>
</dbReference>
<dbReference type="Gene3D" id="1.20.1250.20">
    <property type="entry name" value="MFS general substrate transporter like domains"/>
    <property type="match status" value="1"/>
</dbReference>
<dbReference type="InterPro" id="IPR020846">
    <property type="entry name" value="MFS_dom"/>
</dbReference>
<dbReference type="InterPro" id="IPR005828">
    <property type="entry name" value="MFS_sugar_transport-like"/>
</dbReference>
<dbReference type="InterPro" id="IPR050820">
    <property type="entry name" value="MFS_Sugar_Transporter"/>
</dbReference>
<dbReference type="InterPro" id="IPR036259">
    <property type="entry name" value="MFS_trans_sf"/>
</dbReference>
<dbReference type="InterPro" id="IPR003663">
    <property type="entry name" value="Sugar/inositol_transpt"/>
</dbReference>
<dbReference type="InterPro" id="IPR005829">
    <property type="entry name" value="Sugar_transporter_CS"/>
</dbReference>
<dbReference type="InterPro" id="IPR047984">
    <property type="entry name" value="XylE-like"/>
</dbReference>
<dbReference type="NCBIfam" id="TIGR00879">
    <property type="entry name" value="SP"/>
    <property type="match status" value="1"/>
</dbReference>
<dbReference type="PANTHER" id="PTHR48023">
    <property type="entry name" value="D-XYLOSE-PROTON SYMPORTER-LIKE 2"/>
    <property type="match status" value="1"/>
</dbReference>
<dbReference type="PANTHER" id="PTHR48023:SF4">
    <property type="entry name" value="D-XYLOSE-PROTON SYMPORTER-LIKE 2"/>
    <property type="match status" value="1"/>
</dbReference>
<dbReference type="Pfam" id="PF00083">
    <property type="entry name" value="Sugar_tr"/>
    <property type="match status" value="1"/>
</dbReference>
<dbReference type="PRINTS" id="PR00171">
    <property type="entry name" value="SUGRTRNSPORT"/>
</dbReference>
<dbReference type="SUPFAM" id="SSF103473">
    <property type="entry name" value="MFS general substrate transporter"/>
    <property type="match status" value="1"/>
</dbReference>
<dbReference type="PROSITE" id="PS50850">
    <property type="entry name" value="MFS"/>
    <property type="match status" value="1"/>
</dbReference>
<dbReference type="PROSITE" id="PS00217">
    <property type="entry name" value="SUGAR_TRANSPORT_2"/>
    <property type="match status" value="1"/>
</dbReference>
<name>YNCC_BACSU</name>